<keyword id="KW-0143">Chaperone</keyword>
<keyword id="KW-0496">Mitochondrion</keyword>
<sequence length="79" mass="9352">MPKRLSGLQKEVLHLYRASIRTAHTKPKENQVNFVNYIHEEFGKYRNLPRKDFTTIEHLLRVGNKKIATFSHPELTNIH</sequence>
<name>SDHF1_YEAS7</name>
<gene>
    <name type="ORF">SCY_1267</name>
</gene>
<protein>
    <recommendedName>
        <fullName evidence="1">Succinate dehydrogenase assembly factor 1, mitochondrial</fullName>
        <shortName evidence="1">SDH assembly factor 1</shortName>
        <shortName evidence="1">SDHAF1</shortName>
    </recommendedName>
</protein>
<comment type="function">
    <text evidence="1">Plays an essential role in the assembly of succinate dehydrogenase (SDH), an enzyme complex (also referred to as respiratory complex II) that is a component of both the tricarboxylic acid (TCA) cycle and the mitochondrial electron transport chain, and which couples the oxidation of succinate to fumarate with the reduction of ubiquinone (coenzyme Q) to ubiquinol. Promotes maturation of the iron-sulfur protein subunit SDH2 of the SDH catalytic dimer, protecting it from the deleterious effects of oxidants. Acts together with SDHAF3 (SDH7).</text>
</comment>
<comment type="subunit">
    <text evidence="1">Interacts with SDH2 within an SDH1-SDH2 subcomplex.</text>
</comment>
<comment type="subcellular location">
    <subcellularLocation>
        <location evidence="1">Mitochondrion matrix</location>
    </subcellularLocation>
</comment>
<comment type="similarity">
    <text evidence="2">Belongs to the complex I LYR family. SDHAF1 subfamily.</text>
</comment>
<dbReference type="EMBL" id="AAFW02000145">
    <property type="protein sequence ID" value="EDN60709.1"/>
    <property type="molecule type" value="Genomic_DNA"/>
</dbReference>
<dbReference type="SMR" id="A6ZYX9"/>
<dbReference type="HOGENOM" id="CLU_154777_1_1_1"/>
<dbReference type="Proteomes" id="UP000007060">
    <property type="component" value="Unassembled WGS sequence"/>
</dbReference>
<dbReference type="GO" id="GO:0005759">
    <property type="term" value="C:mitochondrial matrix"/>
    <property type="evidence" value="ECO:0007669"/>
    <property type="project" value="UniProtKB-SubCell"/>
</dbReference>
<dbReference type="GO" id="GO:0034553">
    <property type="term" value="P:mitochondrial respiratory chain complex II assembly"/>
    <property type="evidence" value="ECO:0007669"/>
    <property type="project" value="InterPro"/>
</dbReference>
<dbReference type="CDD" id="cd20268">
    <property type="entry name" value="Complex1_LYR_SDHAF1_LYRM8"/>
    <property type="match status" value="1"/>
</dbReference>
<dbReference type="InterPro" id="IPR008011">
    <property type="entry name" value="Complex1_LYR_dom"/>
</dbReference>
<dbReference type="InterPro" id="IPR045295">
    <property type="entry name" value="Complex1_LYR_SDHAF1_LYRM8"/>
</dbReference>
<dbReference type="PANTHER" id="PTHR13675">
    <property type="entry name" value="LYR MOTIF-CONTAINING PROTEIN 2"/>
    <property type="match status" value="1"/>
</dbReference>
<dbReference type="PANTHER" id="PTHR13675:SF1">
    <property type="entry name" value="SUCCINATE DEHYDROGENASE ASSEMBLY FACTOR 1, MITOCHONDRIAL"/>
    <property type="match status" value="1"/>
</dbReference>
<dbReference type="Pfam" id="PF05347">
    <property type="entry name" value="Complex1_LYR"/>
    <property type="match status" value="1"/>
</dbReference>
<proteinExistence type="inferred from homology"/>
<feature type="chain" id="PRO_0000327919" description="Succinate dehydrogenase assembly factor 1, mitochondrial">
    <location>
        <begin position="1"/>
        <end position="79"/>
    </location>
</feature>
<accession>A6ZYX9</accession>
<organism>
    <name type="scientific">Saccharomyces cerevisiae (strain YJM789)</name>
    <name type="common">Baker's yeast</name>
    <dbReference type="NCBI Taxonomy" id="307796"/>
    <lineage>
        <taxon>Eukaryota</taxon>
        <taxon>Fungi</taxon>
        <taxon>Dikarya</taxon>
        <taxon>Ascomycota</taxon>
        <taxon>Saccharomycotina</taxon>
        <taxon>Saccharomycetes</taxon>
        <taxon>Saccharomycetales</taxon>
        <taxon>Saccharomycetaceae</taxon>
        <taxon>Saccharomyces</taxon>
    </lineage>
</organism>
<reference key="1">
    <citation type="journal article" date="2007" name="Proc. Natl. Acad. Sci. U.S.A.">
        <title>Genome sequencing and comparative analysis of Saccharomyces cerevisiae strain YJM789.</title>
        <authorList>
            <person name="Wei W."/>
            <person name="McCusker J.H."/>
            <person name="Hyman R.W."/>
            <person name="Jones T."/>
            <person name="Ning Y."/>
            <person name="Cao Z."/>
            <person name="Gu Z."/>
            <person name="Bruno D."/>
            <person name="Miranda M."/>
            <person name="Nguyen M."/>
            <person name="Wilhelmy J."/>
            <person name="Komp C."/>
            <person name="Tamse R."/>
            <person name="Wang X."/>
            <person name="Jia P."/>
            <person name="Luedi P."/>
            <person name="Oefner P.J."/>
            <person name="David L."/>
            <person name="Dietrich F.S."/>
            <person name="Li Y."/>
            <person name="Davis R.W."/>
            <person name="Steinmetz L.M."/>
        </authorList>
    </citation>
    <scope>NUCLEOTIDE SEQUENCE [LARGE SCALE GENOMIC DNA]</scope>
    <source>
        <strain>YJM789</strain>
    </source>
</reference>
<evidence type="ECO:0000250" key="1">
    <source>
        <dbReference type="UniProtKB" id="Q3E785"/>
    </source>
</evidence>
<evidence type="ECO:0000305" key="2"/>